<protein>
    <recommendedName>
        <fullName evidence="1">Large ribosomal subunit protein uL22</fullName>
    </recommendedName>
    <alternativeName>
        <fullName evidence="2">50S ribosomal protein L22</fullName>
    </alternativeName>
</protein>
<dbReference type="EMBL" id="CP000232">
    <property type="protein sequence ID" value="ABC20737.1"/>
    <property type="molecule type" value="Genomic_DNA"/>
</dbReference>
<dbReference type="RefSeq" id="YP_431280.1">
    <property type="nucleotide sequence ID" value="NC_007644.1"/>
</dbReference>
<dbReference type="SMR" id="Q2RFQ2"/>
<dbReference type="STRING" id="264732.Moth_2455"/>
<dbReference type="EnsemblBacteria" id="ABC20737">
    <property type="protein sequence ID" value="ABC20737"/>
    <property type="gene ID" value="Moth_2455"/>
</dbReference>
<dbReference type="KEGG" id="mta:Moth_2455"/>
<dbReference type="PATRIC" id="fig|264732.11.peg.2673"/>
<dbReference type="eggNOG" id="COG0091">
    <property type="taxonomic scope" value="Bacteria"/>
</dbReference>
<dbReference type="HOGENOM" id="CLU_083987_3_3_9"/>
<dbReference type="OrthoDB" id="9805969at2"/>
<dbReference type="GO" id="GO:0022625">
    <property type="term" value="C:cytosolic large ribosomal subunit"/>
    <property type="evidence" value="ECO:0007669"/>
    <property type="project" value="TreeGrafter"/>
</dbReference>
<dbReference type="GO" id="GO:0019843">
    <property type="term" value="F:rRNA binding"/>
    <property type="evidence" value="ECO:0007669"/>
    <property type="project" value="UniProtKB-UniRule"/>
</dbReference>
<dbReference type="GO" id="GO:0003735">
    <property type="term" value="F:structural constituent of ribosome"/>
    <property type="evidence" value="ECO:0007669"/>
    <property type="project" value="InterPro"/>
</dbReference>
<dbReference type="GO" id="GO:0006412">
    <property type="term" value="P:translation"/>
    <property type="evidence" value="ECO:0007669"/>
    <property type="project" value="UniProtKB-UniRule"/>
</dbReference>
<dbReference type="CDD" id="cd00336">
    <property type="entry name" value="Ribosomal_L22"/>
    <property type="match status" value="1"/>
</dbReference>
<dbReference type="FunFam" id="3.90.470.10:FF:000011">
    <property type="entry name" value="50S ribosomal protein L22"/>
    <property type="match status" value="1"/>
</dbReference>
<dbReference type="Gene3D" id="3.90.470.10">
    <property type="entry name" value="Ribosomal protein L22/L17"/>
    <property type="match status" value="1"/>
</dbReference>
<dbReference type="HAMAP" id="MF_01331_B">
    <property type="entry name" value="Ribosomal_uL22_B"/>
    <property type="match status" value="1"/>
</dbReference>
<dbReference type="InterPro" id="IPR001063">
    <property type="entry name" value="Ribosomal_uL22"/>
</dbReference>
<dbReference type="InterPro" id="IPR005727">
    <property type="entry name" value="Ribosomal_uL22_bac/chlpt-type"/>
</dbReference>
<dbReference type="InterPro" id="IPR047867">
    <property type="entry name" value="Ribosomal_uL22_bac/org-type"/>
</dbReference>
<dbReference type="InterPro" id="IPR018260">
    <property type="entry name" value="Ribosomal_uL22_CS"/>
</dbReference>
<dbReference type="InterPro" id="IPR036394">
    <property type="entry name" value="Ribosomal_uL22_sf"/>
</dbReference>
<dbReference type="NCBIfam" id="TIGR01044">
    <property type="entry name" value="rplV_bact"/>
    <property type="match status" value="1"/>
</dbReference>
<dbReference type="PANTHER" id="PTHR13501">
    <property type="entry name" value="CHLOROPLAST 50S RIBOSOMAL PROTEIN L22-RELATED"/>
    <property type="match status" value="1"/>
</dbReference>
<dbReference type="PANTHER" id="PTHR13501:SF8">
    <property type="entry name" value="LARGE RIBOSOMAL SUBUNIT PROTEIN UL22M"/>
    <property type="match status" value="1"/>
</dbReference>
<dbReference type="Pfam" id="PF00237">
    <property type="entry name" value="Ribosomal_L22"/>
    <property type="match status" value="1"/>
</dbReference>
<dbReference type="SUPFAM" id="SSF54843">
    <property type="entry name" value="Ribosomal protein L22"/>
    <property type="match status" value="1"/>
</dbReference>
<dbReference type="PROSITE" id="PS00464">
    <property type="entry name" value="RIBOSOMAL_L22"/>
    <property type="match status" value="1"/>
</dbReference>
<feature type="chain" id="PRO_0000243169" description="Large ribosomal subunit protein uL22">
    <location>
        <begin position="1"/>
        <end position="112"/>
    </location>
</feature>
<sequence>MEAKAVARYIRISPRRVRQVIDLIRGKGVREAEAILMVTPKRGSRVVAKVLKSAVANAEHNYDLDASNLVVSRAYVDEGPTLKRYQPRAMGRANIRRKRTSHITVVVGEKED</sequence>
<keyword id="KW-0687">Ribonucleoprotein</keyword>
<keyword id="KW-0689">Ribosomal protein</keyword>
<keyword id="KW-0694">RNA-binding</keyword>
<keyword id="KW-0699">rRNA-binding</keyword>
<accession>Q2RFQ2</accession>
<reference key="1">
    <citation type="journal article" date="2008" name="Environ. Microbiol.">
        <title>The complete genome sequence of Moorella thermoacetica (f. Clostridium thermoaceticum).</title>
        <authorList>
            <person name="Pierce E."/>
            <person name="Xie G."/>
            <person name="Barabote R.D."/>
            <person name="Saunders E."/>
            <person name="Han C.S."/>
            <person name="Detter J.C."/>
            <person name="Richardson P."/>
            <person name="Brettin T.S."/>
            <person name="Das A."/>
            <person name="Ljungdahl L.G."/>
            <person name="Ragsdale S.W."/>
        </authorList>
    </citation>
    <scope>NUCLEOTIDE SEQUENCE [LARGE SCALE GENOMIC DNA]</scope>
    <source>
        <strain>ATCC 39073 / JCM 9320</strain>
    </source>
</reference>
<name>RL22_MOOTA</name>
<evidence type="ECO:0000255" key="1">
    <source>
        <dbReference type="HAMAP-Rule" id="MF_01331"/>
    </source>
</evidence>
<evidence type="ECO:0000305" key="2"/>
<proteinExistence type="inferred from homology"/>
<organism>
    <name type="scientific">Moorella thermoacetica (strain ATCC 39073 / JCM 9320)</name>
    <dbReference type="NCBI Taxonomy" id="264732"/>
    <lineage>
        <taxon>Bacteria</taxon>
        <taxon>Bacillati</taxon>
        <taxon>Bacillota</taxon>
        <taxon>Clostridia</taxon>
        <taxon>Moorellales</taxon>
        <taxon>Moorellaceae</taxon>
        <taxon>Moorella</taxon>
    </lineage>
</organism>
<gene>
    <name evidence="1" type="primary">rplV</name>
    <name type="ordered locus">Moth_2455</name>
</gene>
<comment type="function">
    <text evidence="1">This protein binds specifically to 23S rRNA; its binding is stimulated by other ribosomal proteins, e.g. L4, L17, and L20. It is important during the early stages of 50S assembly. It makes multiple contacts with different domains of the 23S rRNA in the assembled 50S subunit and ribosome (By similarity).</text>
</comment>
<comment type="function">
    <text evidence="1">The globular domain of the protein is located near the polypeptide exit tunnel on the outside of the subunit, while an extended beta-hairpin is found that lines the wall of the exit tunnel in the center of the 70S ribosome.</text>
</comment>
<comment type="subunit">
    <text evidence="1">Part of the 50S ribosomal subunit.</text>
</comment>
<comment type="similarity">
    <text evidence="1">Belongs to the universal ribosomal protein uL22 family.</text>
</comment>